<feature type="chain" id="PRO_0000343414" description="Testis-specific H1 histone">
    <location>
        <begin position="1"/>
        <end position="255"/>
    </location>
</feature>
<feature type="region of interest" description="Disordered" evidence="3">
    <location>
        <begin position="1"/>
        <end position="54"/>
    </location>
</feature>
<feature type="region of interest" description="Disordered" evidence="3">
    <location>
        <begin position="124"/>
        <end position="255"/>
    </location>
</feature>
<feature type="compositionally biased region" description="Basic residues" evidence="3">
    <location>
        <begin position="124"/>
        <end position="134"/>
    </location>
</feature>
<feature type="compositionally biased region" description="Low complexity" evidence="3">
    <location>
        <begin position="142"/>
        <end position="152"/>
    </location>
</feature>
<feature type="compositionally biased region" description="Basic residues" evidence="3">
    <location>
        <begin position="153"/>
        <end position="166"/>
    </location>
</feature>
<feature type="compositionally biased region" description="Basic residues" evidence="3">
    <location>
        <begin position="174"/>
        <end position="194"/>
    </location>
</feature>
<feature type="compositionally biased region" description="Basic and acidic residues" evidence="3">
    <location>
        <begin position="195"/>
        <end position="230"/>
    </location>
</feature>
<feature type="compositionally biased region" description="Basic and acidic residues" evidence="3">
    <location>
        <begin position="238"/>
        <end position="248"/>
    </location>
</feature>
<feature type="modified residue" description="Phosphoserine" evidence="1">
    <location>
        <position position="56"/>
    </location>
</feature>
<feature type="sequence variant" id="VAR_044371" description="In dbSNP:rs2732441." evidence="5">
    <original>R</original>
    <variation>G</variation>
    <location>
        <position position="84"/>
    </location>
</feature>
<feature type="sequence variant" id="VAR_044372" description="In dbSNP:rs766280749." evidence="5">
    <original>L</original>
    <variation>P</variation>
    <location>
        <position position="108"/>
    </location>
</feature>
<feature type="sequence variant" id="VAR_044373" description="In dbSNP:rs752698412." evidence="5">
    <original>R</original>
    <variation>S</variation>
    <location>
        <position position="136"/>
    </location>
</feature>
<feature type="sequence variant" id="VAR_044374" description="In dbSNP:rs1471997." evidence="4 5">
    <original>R</original>
    <variation>Q</variation>
    <location>
        <position position="174"/>
    </location>
</feature>
<feature type="sequence variant" id="VAR_047359" description="In dbSNP:rs1471997.">
    <original>R</original>
    <variation>Q</variation>
    <location>
        <position position="195"/>
    </location>
</feature>
<feature type="sequence variant" id="VAR_044375" description="In dbSNP:rs2291483." evidence="5">
    <original>S</original>
    <variation>F</variation>
    <location>
        <position position="237"/>
    </location>
</feature>
<feature type="sequence conflict" description="In Ref. 3; AAI18636." evidence="6" ref="3">
    <original>K</original>
    <variation>N</variation>
    <location>
        <position position="231"/>
    </location>
</feature>
<comment type="function">
    <text evidence="2 5">Essential for normal spermatogenesis and male fertility (PubMed:16533358). Required for proper cell restructuring and DNA condensation during the elongation phase of spermiogenesis. Involved in the histone-protamine transition of sperm chromatin and the subsequent production of functional sperm. Binds both double-stranded and single-stranded DNA, ATP and protamine-1.</text>
</comment>
<comment type="interaction">
    <interactant intactId="EBI-12383084">
        <id>Q75WM6</id>
    </interactant>
    <interactant intactId="EBI-12142839">
        <id>U3KQK0</id>
        <label>H2BC15</label>
    </interactant>
    <organismsDiffer>false</organismsDiffer>
    <experiments>3</experiments>
</comment>
<comment type="interaction">
    <interactant intactId="EBI-12383084">
        <id>Q75WM6</id>
    </interactant>
    <interactant intactId="EBI-21014821">
        <id>A4D2B0</id>
        <label>MBLAC1</label>
    </interactant>
    <organismsDiffer>false</organismsDiffer>
    <experiments>2</experiments>
</comment>
<comment type="interaction">
    <interactant intactId="EBI-12383084">
        <id>Q75WM6</id>
    </interactant>
    <interactant intactId="EBI-16439278">
        <id>Q6FHY5</id>
        <label>MEOX2</label>
    </interactant>
    <organismsDiffer>false</organismsDiffer>
    <experiments>3</experiments>
</comment>
<comment type="subcellular location">
    <subcellularLocation>
        <location evidence="2">Nucleus</location>
    </subcellularLocation>
    <subcellularLocation>
        <location evidence="2">Chromosome</location>
    </subcellularLocation>
    <text evidence="2">In round and elongating spermatids, specifically localizes to a chromatin domain at the apical pole.</text>
</comment>
<comment type="tissue specificity">
    <text evidence="5">Testis-specific.</text>
</comment>
<comment type="similarity">
    <text evidence="6">Belongs to the histone H1/H5 family.</text>
</comment>
<comment type="caution">
    <text evidence="6">It is uncertain whether Met-1 or Met-22 is the initiator.</text>
</comment>
<comment type="sequence caution" evidence="6">
    <conflict type="erroneous initiation">
        <sequence resource="EMBL-CDS" id="BAD13382"/>
    </conflict>
</comment>
<accession>Q75WM6</accession>
<accession>Q147U8</accession>
<accession>Q5GKZ5</accession>
<accession>Q7Z694</accession>
<reference key="1">
    <citation type="submission" date="2003-05" db="EMBL/GenBank/DDBJ databases">
        <authorList>
            <person name="Huang C.Q."/>
            <person name="Shan Y.X."/>
            <person name="Wu S.L."/>
            <person name="Cheng Z."/>
        </authorList>
    </citation>
    <scope>NUCLEOTIDE SEQUENCE [MRNA]</scope>
</reference>
<reference key="2">
    <citation type="journal article" date="2006" name="Nature">
        <title>The finished DNA sequence of human chromosome 12.</title>
        <authorList>
            <person name="Scherer S.E."/>
            <person name="Muzny D.M."/>
            <person name="Buhay C.J."/>
            <person name="Chen R."/>
            <person name="Cree A."/>
            <person name="Ding Y."/>
            <person name="Dugan-Rocha S."/>
            <person name="Gill R."/>
            <person name="Gunaratne P."/>
            <person name="Harris R.A."/>
            <person name="Hawes A.C."/>
            <person name="Hernandez J."/>
            <person name="Hodgson A.V."/>
            <person name="Hume J."/>
            <person name="Jackson A."/>
            <person name="Khan Z.M."/>
            <person name="Kovar-Smith C."/>
            <person name="Lewis L.R."/>
            <person name="Lozado R.J."/>
            <person name="Metzker M.L."/>
            <person name="Milosavljevic A."/>
            <person name="Miner G.R."/>
            <person name="Montgomery K.T."/>
            <person name="Morgan M.B."/>
            <person name="Nazareth L.V."/>
            <person name="Scott G."/>
            <person name="Sodergren E."/>
            <person name="Song X.-Z."/>
            <person name="Steffen D."/>
            <person name="Lovering R.C."/>
            <person name="Wheeler D.A."/>
            <person name="Worley K.C."/>
            <person name="Yuan Y."/>
            <person name="Zhang Z."/>
            <person name="Adams C.Q."/>
            <person name="Ansari-Lari M.A."/>
            <person name="Ayele M."/>
            <person name="Brown M.J."/>
            <person name="Chen G."/>
            <person name="Chen Z."/>
            <person name="Clerc-Blankenburg K.P."/>
            <person name="Davis C."/>
            <person name="Delgado O."/>
            <person name="Dinh H.H."/>
            <person name="Draper H."/>
            <person name="Gonzalez-Garay M.L."/>
            <person name="Havlak P."/>
            <person name="Jackson L.R."/>
            <person name="Jacob L.S."/>
            <person name="Kelly S.H."/>
            <person name="Li L."/>
            <person name="Li Z."/>
            <person name="Liu J."/>
            <person name="Liu W."/>
            <person name="Lu J."/>
            <person name="Maheshwari M."/>
            <person name="Nguyen B.-V."/>
            <person name="Okwuonu G.O."/>
            <person name="Pasternak S."/>
            <person name="Perez L.M."/>
            <person name="Plopper F.J.H."/>
            <person name="Santibanez J."/>
            <person name="Shen H."/>
            <person name="Tabor P.E."/>
            <person name="Verduzco D."/>
            <person name="Waldron L."/>
            <person name="Wang Q."/>
            <person name="Williams G.A."/>
            <person name="Zhang J."/>
            <person name="Zhou J."/>
            <person name="Allen C.C."/>
            <person name="Amin A.G."/>
            <person name="Anyalebechi V."/>
            <person name="Bailey M."/>
            <person name="Barbaria J.A."/>
            <person name="Bimage K.E."/>
            <person name="Bryant N.P."/>
            <person name="Burch P.E."/>
            <person name="Burkett C.E."/>
            <person name="Burrell K.L."/>
            <person name="Calderon E."/>
            <person name="Cardenas V."/>
            <person name="Carter K."/>
            <person name="Casias K."/>
            <person name="Cavazos I."/>
            <person name="Cavazos S.R."/>
            <person name="Ceasar H."/>
            <person name="Chacko J."/>
            <person name="Chan S.N."/>
            <person name="Chavez D."/>
            <person name="Christopoulos C."/>
            <person name="Chu J."/>
            <person name="Cockrell R."/>
            <person name="Cox C.D."/>
            <person name="Dang M."/>
            <person name="Dathorne S.R."/>
            <person name="David R."/>
            <person name="Davis C.M."/>
            <person name="Davy-Carroll L."/>
            <person name="Deshazo D.R."/>
            <person name="Donlin J.E."/>
            <person name="D'Souza L."/>
            <person name="Eaves K.A."/>
            <person name="Egan A."/>
            <person name="Emery-Cohen A.J."/>
            <person name="Escotto M."/>
            <person name="Flagg N."/>
            <person name="Forbes L.D."/>
            <person name="Gabisi A.M."/>
            <person name="Garza M."/>
            <person name="Hamilton C."/>
            <person name="Henderson N."/>
            <person name="Hernandez O."/>
            <person name="Hines S."/>
            <person name="Hogues M.E."/>
            <person name="Huang M."/>
            <person name="Idlebird D.G."/>
            <person name="Johnson R."/>
            <person name="Jolivet A."/>
            <person name="Jones S."/>
            <person name="Kagan R."/>
            <person name="King L.M."/>
            <person name="Leal B."/>
            <person name="Lebow H."/>
            <person name="Lee S."/>
            <person name="LeVan J.M."/>
            <person name="Lewis L.C."/>
            <person name="London P."/>
            <person name="Lorensuhewa L.M."/>
            <person name="Loulseged H."/>
            <person name="Lovett D.A."/>
            <person name="Lucier A."/>
            <person name="Lucier R.L."/>
            <person name="Ma J."/>
            <person name="Madu R.C."/>
            <person name="Mapua P."/>
            <person name="Martindale A.D."/>
            <person name="Martinez E."/>
            <person name="Massey E."/>
            <person name="Mawhiney S."/>
            <person name="Meador M.G."/>
            <person name="Mendez S."/>
            <person name="Mercado C."/>
            <person name="Mercado I.C."/>
            <person name="Merritt C.E."/>
            <person name="Miner Z.L."/>
            <person name="Minja E."/>
            <person name="Mitchell T."/>
            <person name="Mohabbat F."/>
            <person name="Mohabbat K."/>
            <person name="Montgomery B."/>
            <person name="Moore N."/>
            <person name="Morris S."/>
            <person name="Munidasa M."/>
            <person name="Ngo R.N."/>
            <person name="Nguyen N.B."/>
            <person name="Nickerson E."/>
            <person name="Nwaokelemeh O.O."/>
            <person name="Nwokenkwo S."/>
            <person name="Obregon M."/>
            <person name="Oguh M."/>
            <person name="Oragunye N."/>
            <person name="Oviedo R.J."/>
            <person name="Parish B.J."/>
            <person name="Parker D.N."/>
            <person name="Parrish J."/>
            <person name="Parks K.L."/>
            <person name="Paul H.A."/>
            <person name="Payton B.A."/>
            <person name="Perez A."/>
            <person name="Perrin W."/>
            <person name="Pickens A."/>
            <person name="Primus E.L."/>
            <person name="Pu L.-L."/>
            <person name="Puazo M."/>
            <person name="Quiles M.M."/>
            <person name="Quiroz J.B."/>
            <person name="Rabata D."/>
            <person name="Reeves K."/>
            <person name="Ruiz S.J."/>
            <person name="Shao H."/>
            <person name="Sisson I."/>
            <person name="Sonaike T."/>
            <person name="Sorelle R.P."/>
            <person name="Sutton A.E."/>
            <person name="Svatek A.F."/>
            <person name="Svetz L.A."/>
            <person name="Tamerisa K.S."/>
            <person name="Taylor T.R."/>
            <person name="Teague B."/>
            <person name="Thomas N."/>
            <person name="Thorn R.D."/>
            <person name="Trejos Z.Y."/>
            <person name="Trevino B.K."/>
            <person name="Ukegbu O.N."/>
            <person name="Urban J.B."/>
            <person name="Vasquez L.I."/>
            <person name="Vera V.A."/>
            <person name="Villasana D.M."/>
            <person name="Wang L."/>
            <person name="Ward-Moore S."/>
            <person name="Warren J.T."/>
            <person name="Wei X."/>
            <person name="White F."/>
            <person name="Williamson A.L."/>
            <person name="Wleczyk R."/>
            <person name="Wooden H.S."/>
            <person name="Wooden S.H."/>
            <person name="Yen J."/>
            <person name="Yoon L."/>
            <person name="Yoon V."/>
            <person name="Zorrilla S.E."/>
            <person name="Nelson D."/>
            <person name="Kucherlapati R."/>
            <person name="Weinstock G."/>
            <person name="Gibbs R.A."/>
        </authorList>
    </citation>
    <scope>NUCLEOTIDE SEQUENCE [LARGE SCALE GENOMIC DNA]</scope>
</reference>
<reference key="3">
    <citation type="journal article" date="2004" name="Genome Res.">
        <title>The status, quality, and expansion of the NIH full-length cDNA project: the Mammalian Gene Collection (MGC).</title>
        <authorList>
            <consortium name="The MGC Project Team"/>
        </authorList>
    </citation>
    <scope>NUCLEOTIDE SEQUENCE [LARGE SCALE MRNA]</scope>
    <scope>VARIANT GLN-174</scope>
</reference>
<reference key="4">
    <citation type="journal article" date="2006" name="Int. J. Androl.">
        <title>Expression profiles and single-nucleotide polymorphism analysis of human HANP1/H1T2 encoding a histone H1-like protein.</title>
        <authorList>
            <person name="Tanaka H."/>
            <person name="Matsuoka Y."/>
            <person name="Onishi M."/>
            <person name="Kitamura K."/>
            <person name="Miyagawa Y."/>
            <person name="Nishimura H."/>
            <person name="Tsujimura A."/>
            <person name="Okuyama A."/>
            <person name="Nishimune Y."/>
        </authorList>
    </citation>
    <scope>NUCLEOTIDE SEQUENCE [MRNA] OF 17-255</scope>
    <scope>FUNCTION</scope>
    <scope>TISSUE SPECIFICITY</scope>
    <scope>VARIANTS GLY-84; PRO-108; SER-136; GLN-174 AND PHE-237</scope>
    <source>
        <tissue>Testis</tissue>
    </source>
</reference>
<reference key="5">
    <citation type="journal article" date="2005" name="Proc. Natl. Acad. Sci. U.S.A.">
        <title>Polar nuclear localization of H1T2, a histone H1 variant, required for spermatid elongation and DNA condensation during spermiogenesis.</title>
        <authorList>
            <person name="Martianov I."/>
            <person name="Brancorsini S."/>
            <person name="Catena R."/>
            <person name="Gansmuller A."/>
            <person name="Kotaja N."/>
            <person name="Parvinen M."/>
            <person name="Sassone-Corsi P."/>
            <person name="Davidson I."/>
        </authorList>
    </citation>
    <scope>NUCLEOTIDE SEQUENCE [GENOMIC DNA] OF 22-255</scope>
</reference>
<organism>
    <name type="scientific">Homo sapiens</name>
    <name type="common">Human</name>
    <dbReference type="NCBI Taxonomy" id="9606"/>
    <lineage>
        <taxon>Eukaryota</taxon>
        <taxon>Metazoa</taxon>
        <taxon>Chordata</taxon>
        <taxon>Craniata</taxon>
        <taxon>Vertebrata</taxon>
        <taxon>Euteleostomi</taxon>
        <taxon>Mammalia</taxon>
        <taxon>Eutheria</taxon>
        <taxon>Euarchontoglires</taxon>
        <taxon>Primates</taxon>
        <taxon>Haplorrhini</taxon>
        <taxon>Catarrhini</taxon>
        <taxon>Hominidae</taxon>
        <taxon>Homo</taxon>
    </lineage>
</organism>
<gene>
    <name evidence="7" type="primary">H1-7</name>
    <name evidence="7" type="synonym">H1FNT</name>
    <name type="synonym">HANP1</name>
</gene>
<proteinExistence type="evidence at protein level"/>
<protein>
    <recommendedName>
        <fullName>Testis-specific H1 histone</fullName>
    </recommendedName>
    <alternativeName>
        <fullName>Haploid germ cell-specific nuclear protein 1</fullName>
    </alternativeName>
    <alternativeName>
        <fullName evidence="7">Histone H1.7</fullName>
    </alternativeName>
    <alternativeName>
        <fullName>Histone H1t2</fullName>
    </alternativeName>
</protein>
<dbReference type="EMBL" id="AY302593">
    <property type="protein sequence ID" value="AAP60022.1"/>
    <property type="molecule type" value="mRNA"/>
</dbReference>
<dbReference type="EMBL" id="AC024257">
    <property type="status" value="NOT_ANNOTATED_CDS"/>
    <property type="molecule type" value="Genomic_DNA"/>
</dbReference>
<dbReference type="EMBL" id="BC118635">
    <property type="protein sequence ID" value="AAI18636.1"/>
    <property type="molecule type" value="mRNA"/>
</dbReference>
<dbReference type="EMBL" id="BC119787">
    <property type="protein sequence ID" value="AAI19788.1"/>
    <property type="molecule type" value="mRNA"/>
</dbReference>
<dbReference type="EMBL" id="AB121028">
    <property type="protein sequence ID" value="BAD13382.2"/>
    <property type="status" value="ALT_INIT"/>
    <property type="molecule type" value="mRNA"/>
</dbReference>
<dbReference type="EMBL" id="AY496854">
    <property type="protein sequence ID" value="AAS49492.1"/>
    <property type="molecule type" value="Genomic_DNA"/>
</dbReference>
<dbReference type="CCDS" id="CCDS8762.1"/>
<dbReference type="RefSeq" id="NP_861453.1">
    <property type="nucleotide sequence ID" value="NM_181788.1"/>
</dbReference>
<dbReference type="SMR" id="Q75WM6"/>
<dbReference type="BioGRID" id="131143">
    <property type="interactions" value="245"/>
</dbReference>
<dbReference type="FunCoup" id="Q75WM6">
    <property type="interactions" value="13"/>
</dbReference>
<dbReference type="IntAct" id="Q75WM6">
    <property type="interactions" value="184"/>
</dbReference>
<dbReference type="STRING" id="9606.ENSP00000334805"/>
<dbReference type="iPTMnet" id="Q75WM6"/>
<dbReference type="PhosphoSitePlus" id="Q75WM6"/>
<dbReference type="BioMuta" id="H1FNT"/>
<dbReference type="DMDM" id="215274115"/>
<dbReference type="MassIVE" id="Q75WM6"/>
<dbReference type="PaxDb" id="9606-ENSP00000334805"/>
<dbReference type="PeptideAtlas" id="Q75WM6"/>
<dbReference type="ProteomicsDB" id="68656"/>
<dbReference type="Antibodypedia" id="55622">
    <property type="antibodies" value="25 antibodies from 12 providers"/>
</dbReference>
<dbReference type="DNASU" id="341567"/>
<dbReference type="Ensembl" id="ENST00000335017.1">
    <property type="protein sequence ID" value="ENSP00000334805.1"/>
    <property type="gene ID" value="ENSG00000187166.1"/>
</dbReference>
<dbReference type="GeneID" id="341567"/>
<dbReference type="KEGG" id="hsa:341567"/>
<dbReference type="MANE-Select" id="ENST00000335017.1">
    <property type="protein sequence ID" value="ENSP00000334805.1"/>
    <property type="RefSeq nucleotide sequence ID" value="NM_181788.1"/>
    <property type="RefSeq protein sequence ID" value="NP_861453.1"/>
</dbReference>
<dbReference type="UCSC" id="uc001rrm.3">
    <property type="organism name" value="human"/>
</dbReference>
<dbReference type="AGR" id="HGNC:24893"/>
<dbReference type="CTD" id="341567"/>
<dbReference type="DisGeNET" id="341567"/>
<dbReference type="GeneCards" id="H1-7"/>
<dbReference type="HGNC" id="HGNC:24893">
    <property type="gene designation" value="H1-7"/>
</dbReference>
<dbReference type="HPA" id="ENSG00000187166">
    <property type="expression patterns" value="Tissue enriched (testis)"/>
</dbReference>
<dbReference type="MIM" id="618565">
    <property type="type" value="gene"/>
</dbReference>
<dbReference type="neXtProt" id="NX_Q75WM6"/>
<dbReference type="OpenTargets" id="ENSG00000187166"/>
<dbReference type="VEuPathDB" id="HostDB:ENSG00000187166"/>
<dbReference type="eggNOG" id="ENOG502S7R2">
    <property type="taxonomic scope" value="Eukaryota"/>
</dbReference>
<dbReference type="GeneTree" id="ENSGT00730000111596"/>
<dbReference type="HOGENOM" id="CLU_094439_0_0_1"/>
<dbReference type="InParanoid" id="Q75WM6"/>
<dbReference type="OMA" id="AGYFRVW"/>
<dbReference type="OrthoDB" id="9451724at2759"/>
<dbReference type="PAN-GO" id="Q75WM6">
    <property type="GO annotations" value="0 GO annotations based on evolutionary models"/>
</dbReference>
<dbReference type="PhylomeDB" id="Q75WM6"/>
<dbReference type="TreeFam" id="TF338403"/>
<dbReference type="PathwayCommons" id="Q75WM6"/>
<dbReference type="SignaLink" id="Q75WM6"/>
<dbReference type="BioGRID-ORCS" id="341567">
    <property type="hits" value="12 hits in 1145 CRISPR screens"/>
</dbReference>
<dbReference type="CD-CODE" id="91857CE7">
    <property type="entry name" value="Nucleolus"/>
</dbReference>
<dbReference type="GenomeRNAi" id="341567"/>
<dbReference type="Pharos" id="Q75WM6">
    <property type="development level" value="Tdark"/>
</dbReference>
<dbReference type="PRO" id="PR:Q75WM6"/>
<dbReference type="Proteomes" id="UP000005640">
    <property type="component" value="Chromosome 12"/>
</dbReference>
<dbReference type="RNAct" id="Q75WM6">
    <property type="molecule type" value="protein"/>
</dbReference>
<dbReference type="Bgee" id="ENSG00000187166">
    <property type="expression patterns" value="Expressed in left testis and 97 other cell types or tissues"/>
</dbReference>
<dbReference type="ExpressionAtlas" id="Q75WM6">
    <property type="expression patterns" value="baseline and differential"/>
</dbReference>
<dbReference type="GO" id="GO:0000785">
    <property type="term" value="C:chromatin"/>
    <property type="evidence" value="ECO:0000250"/>
    <property type="project" value="HGNC"/>
</dbReference>
<dbReference type="GO" id="GO:0005634">
    <property type="term" value="C:nucleus"/>
    <property type="evidence" value="ECO:0007005"/>
    <property type="project" value="UniProtKB"/>
</dbReference>
<dbReference type="GO" id="GO:0005524">
    <property type="term" value="F:ATP binding"/>
    <property type="evidence" value="ECO:0007669"/>
    <property type="project" value="UniProtKB-KW"/>
</dbReference>
<dbReference type="GO" id="GO:0003690">
    <property type="term" value="F:double-stranded DNA binding"/>
    <property type="evidence" value="ECO:0000318"/>
    <property type="project" value="GO_Central"/>
</dbReference>
<dbReference type="GO" id="GO:0031492">
    <property type="term" value="F:nucleosomal DNA binding"/>
    <property type="evidence" value="ECO:0000318"/>
    <property type="project" value="GO_Central"/>
</dbReference>
<dbReference type="GO" id="GO:0030261">
    <property type="term" value="P:chromosome condensation"/>
    <property type="evidence" value="ECO:0000318"/>
    <property type="project" value="GO_Central"/>
</dbReference>
<dbReference type="GO" id="GO:0045910">
    <property type="term" value="P:negative regulation of DNA recombination"/>
    <property type="evidence" value="ECO:0000318"/>
    <property type="project" value="GO_Central"/>
</dbReference>
<dbReference type="GO" id="GO:0035092">
    <property type="term" value="P:sperm DNA condensation"/>
    <property type="evidence" value="ECO:0000250"/>
    <property type="project" value="HGNC"/>
</dbReference>
<dbReference type="GO" id="GO:0007290">
    <property type="term" value="P:spermatid nucleus elongation"/>
    <property type="evidence" value="ECO:0000250"/>
    <property type="project" value="HGNC"/>
</dbReference>
<name>H1FNT_HUMAN</name>
<evidence type="ECO:0000250" key="1">
    <source>
        <dbReference type="UniProtKB" id="Q5RKG3"/>
    </source>
</evidence>
<evidence type="ECO:0000250" key="2">
    <source>
        <dbReference type="UniProtKB" id="Q8CJI4"/>
    </source>
</evidence>
<evidence type="ECO:0000256" key="3">
    <source>
        <dbReference type="SAM" id="MobiDB-lite"/>
    </source>
</evidence>
<evidence type="ECO:0000269" key="4">
    <source>
    </source>
</evidence>
<evidence type="ECO:0000269" key="5">
    <source>
    </source>
</evidence>
<evidence type="ECO:0000305" key="6"/>
<evidence type="ECO:0000312" key="7">
    <source>
        <dbReference type="HGNC" id="HGNC:24893"/>
    </source>
</evidence>
<keyword id="KW-0067">ATP-binding</keyword>
<keyword id="KW-0158">Chromosome</keyword>
<keyword id="KW-0217">Developmental protein</keyword>
<keyword id="KW-0221">Differentiation</keyword>
<keyword id="KW-0226">DNA condensation</keyword>
<keyword id="KW-0238">DNA-binding</keyword>
<keyword id="KW-0547">Nucleotide-binding</keyword>
<keyword id="KW-0539">Nucleus</keyword>
<keyword id="KW-0597">Phosphoprotein</keyword>
<keyword id="KW-1267">Proteomics identification</keyword>
<keyword id="KW-1185">Reference proteome</keyword>
<keyword id="KW-0744">Spermatogenesis</keyword>
<sequence>MEQALTGEAQSRWPRRGGSGAMAEAPGPSGESRGHSATQLPAEKTVGGPSRGCSSSVLRVSQLVLQAISTHKGLTLAALKKELRNAGYEVRRKSGRHEAPRGQAKATLLRVSGSDAAGYFRVWKVPKPRRKPGRARQEEGTRAPWRTPAAPRSSRRRRQPLRKAARKAREVWRRNARAKAKANARARRTRRARPRAKEPPCARAKEEAGATAADEGRGQAVKEDTTPRSGKDKRRSSKPREEKQEPKKPAQRTIQ</sequence>